<accession>Q9RUA0</accession>
<gene>
    <name evidence="1" type="primary">nuoN</name>
    <name type="ordered locus">DR_1492</name>
</gene>
<keyword id="KW-1003">Cell membrane</keyword>
<keyword id="KW-0472">Membrane</keyword>
<keyword id="KW-0520">NAD</keyword>
<keyword id="KW-0874">Quinone</keyword>
<keyword id="KW-1185">Reference proteome</keyword>
<keyword id="KW-1278">Translocase</keyword>
<keyword id="KW-0812">Transmembrane</keyword>
<keyword id="KW-1133">Transmembrane helix</keyword>
<keyword id="KW-0813">Transport</keyword>
<dbReference type="EC" id="7.1.1.-" evidence="1"/>
<dbReference type="EMBL" id="AE000513">
    <property type="protein sequence ID" value="AAF11055.1"/>
    <property type="molecule type" value="Genomic_DNA"/>
</dbReference>
<dbReference type="PIR" id="G75389">
    <property type="entry name" value="G75389"/>
</dbReference>
<dbReference type="RefSeq" id="NP_295215.1">
    <property type="nucleotide sequence ID" value="NC_001263.1"/>
</dbReference>
<dbReference type="RefSeq" id="WP_010888131.1">
    <property type="nucleotide sequence ID" value="NC_001263.1"/>
</dbReference>
<dbReference type="SMR" id="Q9RUA0"/>
<dbReference type="FunCoup" id="Q9RUA0">
    <property type="interactions" value="148"/>
</dbReference>
<dbReference type="STRING" id="243230.DR_1492"/>
<dbReference type="PaxDb" id="243230-DR_1492"/>
<dbReference type="EnsemblBacteria" id="AAF11055">
    <property type="protein sequence ID" value="AAF11055"/>
    <property type="gene ID" value="DR_1492"/>
</dbReference>
<dbReference type="GeneID" id="69517731"/>
<dbReference type="KEGG" id="dra:DR_1492"/>
<dbReference type="PATRIC" id="fig|243230.17.peg.1694"/>
<dbReference type="eggNOG" id="COG1007">
    <property type="taxonomic scope" value="Bacteria"/>
</dbReference>
<dbReference type="HOGENOM" id="CLU_007100_1_5_0"/>
<dbReference type="InParanoid" id="Q9RUA0"/>
<dbReference type="OrthoDB" id="9811718at2"/>
<dbReference type="Proteomes" id="UP000002524">
    <property type="component" value="Chromosome 1"/>
</dbReference>
<dbReference type="GO" id="GO:0005886">
    <property type="term" value="C:plasma membrane"/>
    <property type="evidence" value="ECO:0007669"/>
    <property type="project" value="UniProtKB-SubCell"/>
</dbReference>
<dbReference type="GO" id="GO:0008137">
    <property type="term" value="F:NADH dehydrogenase (ubiquinone) activity"/>
    <property type="evidence" value="ECO:0007669"/>
    <property type="project" value="InterPro"/>
</dbReference>
<dbReference type="GO" id="GO:0050136">
    <property type="term" value="F:NADH:ubiquinone reductase (non-electrogenic) activity"/>
    <property type="evidence" value="ECO:0007669"/>
    <property type="project" value="UniProtKB-UniRule"/>
</dbReference>
<dbReference type="GO" id="GO:0048038">
    <property type="term" value="F:quinone binding"/>
    <property type="evidence" value="ECO:0007669"/>
    <property type="project" value="UniProtKB-KW"/>
</dbReference>
<dbReference type="GO" id="GO:0042773">
    <property type="term" value="P:ATP synthesis coupled electron transport"/>
    <property type="evidence" value="ECO:0007669"/>
    <property type="project" value="InterPro"/>
</dbReference>
<dbReference type="HAMAP" id="MF_00445">
    <property type="entry name" value="NDH1_NuoN_1"/>
    <property type="match status" value="1"/>
</dbReference>
<dbReference type="InterPro" id="IPR010096">
    <property type="entry name" value="NADH-Q_OxRdtase_suN/2"/>
</dbReference>
<dbReference type="InterPro" id="IPR001750">
    <property type="entry name" value="ND/Mrp_TM"/>
</dbReference>
<dbReference type="NCBIfam" id="TIGR01770">
    <property type="entry name" value="NDH_I_N"/>
    <property type="match status" value="1"/>
</dbReference>
<dbReference type="PANTHER" id="PTHR22773">
    <property type="entry name" value="NADH DEHYDROGENASE"/>
    <property type="match status" value="1"/>
</dbReference>
<dbReference type="Pfam" id="PF00361">
    <property type="entry name" value="Proton_antipo_M"/>
    <property type="match status" value="1"/>
</dbReference>
<sequence length="492" mass="51853">MNLVLPDVSLAPMLPVLLVLVGAIVSTLGGFWLPRRTLTALNILFVLASGASLVWLWGGAPWAAGMDVPRSAFAGALRADPAALLLGGTVLLGALLTLLVSLDTAYRARVSFAEFDALLMYAVTGCLLIAFSGDLIVMLIGLEIMSLASYVLATLQDSRRSQEAGLKYFLLGSVGSAILIYGLAFLYGATGTLNYAGIAQQVSALDPQNIGILVTGTLLVLSGFGVKIALVPFHQWTPDVYSGAPTLVSLFLSTVVKVAAFAGMLRVFGGALAAGPGWHSVLQILVALTLVIGNAAALYQQNFKRLLAYSAVAHTGFLAMTLLGDTAQGGAALGYYLLVYTLMTVGALAVVAALQRTEEGLTINDMRGLYYRHPAYAVALAFCLASLAGLPPFAGFFAKYLAIQVAFQAGYLLISVLAVLSSVAALVYYLRPAMLMFMPDRTPAREYAHGQRPATNVAVALSLIGIVVLGLLPNLWYGWVASPEIWRLLAGT</sequence>
<protein>
    <recommendedName>
        <fullName evidence="1">NADH-quinone oxidoreductase subunit N</fullName>
        <ecNumber evidence="1">7.1.1.-</ecNumber>
    </recommendedName>
    <alternativeName>
        <fullName evidence="1">NADH dehydrogenase I subunit N</fullName>
    </alternativeName>
    <alternativeName>
        <fullName evidence="1">NDH-1 subunit N</fullName>
    </alternativeName>
</protein>
<reference key="1">
    <citation type="journal article" date="1999" name="Science">
        <title>Genome sequence of the radioresistant bacterium Deinococcus radiodurans R1.</title>
        <authorList>
            <person name="White O."/>
            <person name="Eisen J.A."/>
            <person name="Heidelberg J.F."/>
            <person name="Hickey E.K."/>
            <person name="Peterson J.D."/>
            <person name="Dodson R.J."/>
            <person name="Haft D.H."/>
            <person name="Gwinn M.L."/>
            <person name="Nelson W.C."/>
            <person name="Richardson D.L."/>
            <person name="Moffat K.S."/>
            <person name="Qin H."/>
            <person name="Jiang L."/>
            <person name="Pamphile W."/>
            <person name="Crosby M."/>
            <person name="Shen M."/>
            <person name="Vamathevan J.J."/>
            <person name="Lam P."/>
            <person name="McDonald L.A."/>
            <person name="Utterback T.R."/>
            <person name="Zalewski C."/>
            <person name="Makarova K.S."/>
            <person name="Aravind L."/>
            <person name="Daly M.J."/>
            <person name="Minton K.W."/>
            <person name="Fleischmann R.D."/>
            <person name="Ketchum K.A."/>
            <person name="Nelson K.E."/>
            <person name="Salzberg S.L."/>
            <person name="Smith H.O."/>
            <person name="Venter J.C."/>
            <person name="Fraser C.M."/>
        </authorList>
    </citation>
    <scope>NUCLEOTIDE SEQUENCE [LARGE SCALE GENOMIC DNA]</scope>
    <source>
        <strain>ATCC 13939 / DSM 20539 / JCM 16871 / CCUG 27074 / LMG 4051 / NBRC 15346 / NCIMB 9279 / VKM B-1422 / R1</strain>
    </source>
</reference>
<evidence type="ECO:0000255" key="1">
    <source>
        <dbReference type="HAMAP-Rule" id="MF_00445"/>
    </source>
</evidence>
<organism>
    <name type="scientific">Deinococcus radiodurans (strain ATCC 13939 / DSM 20539 / JCM 16871 / CCUG 27074 / LMG 4051 / NBRC 15346 / NCIMB 9279 / VKM B-1422 / R1)</name>
    <dbReference type="NCBI Taxonomy" id="243230"/>
    <lineage>
        <taxon>Bacteria</taxon>
        <taxon>Thermotogati</taxon>
        <taxon>Deinococcota</taxon>
        <taxon>Deinococci</taxon>
        <taxon>Deinococcales</taxon>
        <taxon>Deinococcaceae</taxon>
        <taxon>Deinococcus</taxon>
    </lineage>
</organism>
<comment type="function">
    <text evidence="1">NDH-1 shuttles electrons from NADH, via FMN and iron-sulfur (Fe-S) centers, to quinones in the respiratory chain. The immediate electron acceptor for the enzyme in this species is believed to be a menaquinone. Couples the redox reaction to proton translocation (for every two electrons transferred, four hydrogen ions are translocated across the cytoplasmic membrane), and thus conserves the redox energy in a proton gradient.</text>
</comment>
<comment type="catalytic activity">
    <reaction evidence="1">
        <text>a quinone + NADH + 5 H(+)(in) = a quinol + NAD(+) + 4 H(+)(out)</text>
        <dbReference type="Rhea" id="RHEA:57888"/>
        <dbReference type="ChEBI" id="CHEBI:15378"/>
        <dbReference type="ChEBI" id="CHEBI:24646"/>
        <dbReference type="ChEBI" id="CHEBI:57540"/>
        <dbReference type="ChEBI" id="CHEBI:57945"/>
        <dbReference type="ChEBI" id="CHEBI:132124"/>
    </reaction>
</comment>
<comment type="subunit">
    <text evidence="1">NDH-1 is composed of 15 different subunits. Subunits NuoA, H, J, K, L, M, N constitute the membrane sector of the complex.</text>
</comment>
<comment type="subcellular location">
    <subcellularLocation>
        <location evidence="1">Cell membrane</location>
        <topology evidence="1">Multi-pass membrane protein</topology>
    </subcellularLocation>
</comment>
<comment type="similarity">
    <text evidence="1">Belongs to the complex I subunit 2 family.</text>
</comment>
<feature type="chain" id="PRO_0000391135" description="NADH-quinone oxidoreductase subunit N">
    <location>
        <begin position="1"/>
        <end position="492"/>
    </location>
</feature>
<feature type="transmembrane region" description="Helical" evidence="1">
    <location>
        <begin position="13"/>
        <end position="33"/>
    </location>
</feature>
<feature type="transmembrane region" description="Helical" evidence="1">
    <location>
        <begin position="43"/>
        <end position="63"/>
    </location>
</feature>
<feature type="transmembrane region" description="Helical" evidence="1">
    <location>
        <begin position="82"/>
        <end position="102"/>
    </location>
</feature>
<feature type="transmembrane region" description="Helical" evidence="1">
    <location>
        <begin position="110"/>
        <end position="132"/>
    </location>
</feature>
<feature type="transmembrane region" description="Helical" evidence="1">
    <location>
        <begin position="136"/>
        <end position="155"/>
    </location>
</feature>
<feature type="transmembrane region" description="Helical" evidence="1">
    <location>
        <begin position="169"/>
        <end position="189"/>
    </location>
</feature>
<feature type="transmembrane region" description="Helical" evidence="1">
    <location>
        <begin position="210"/>
        <end position="230"/>
    </location>
</feature>
<feature type="transmembrane region" description="Helical" evidence="1">
    <location>
        <begin position="245"/>
        <end position="265"/>
    </location>
</feature>
<feature type="transmembrane region" description="Helical" evidence="1">
    <location>
        <begin position="272"/>
        <end position="292"/>
    </location>
</feature>
<feature type="transmembrane region" description="Helical" evidence="1">
    <location>
        <begin position="306"/>
        <end position="326"/>
    </location>
</feature>
<feature type="transmembrane region" description="Helical" evidence="1">
    <location>
        <begin position="331"/>
        <end position="351"/>
    </location>
</feature>
<feature type="transmembrane region" description="Helical" evidence="1">
    <location>
        <begin position="377"/>
        <end position="397"/>
    </location>
</feature>
<feature type="transmembrane region" description="Helical" evidence="1">
    <location>
        <begin position="410"/>
        <end position="430"/>
    </location>
</feature>
<feature type="transmembrane region" description="Helical" evidence="1">
    <location>
        <begin position="457"/>
        <end position="477"/>
    </location>
</feature>
<proteinExistence type="inferred from homology"/>
<name>NUON_DEIRA</name>